<feature type="chain" id="PRO_1000064838" description="UPF0283 membrane protein YcjF">
    <location>
        <begin position="1"/>
        <end position="353"/>
    </location>
</feature>
<feature type="transmembrane region" description="Helical" evidence="1">
    <location>
        <begin position="70"/>
        <end position="90"/>
    </location>
</feature>
<feature type="transmembrane region" description="Helical" evidence="1">
    <location>
        <begin position="100"/>
        <end position="120"/>
    </location>
</feature>
<feature type="transmembrane region" description="Helical" evidence="1">
    <location>
        <begin position="213"/>
        <end position="233"/>
    </location>
</feature>
<comment type="subcellular location">
    <subcellularLocation>
        <location evidence="1">Cell inner membrane</location>
        <topology evidence="1">Multi-pass membrane protein</topology>
    </subcellularLocation>
</comment>
<comment type="similarity">
    <text evidence="1">Belongs to the UPF0283 family.</text>
</comment>
<proteinExistence type="inferred from homology"/>
<accession>Q0TI43</accession>
<protein>
    <recommendedName>
        <fullName evidence="1">UPF0283 membrane protein YcjF</fullName>
    </recommendedName>
</protein>
<gene>
    <name evidence="1" type="primary">ycjF</name>
    <name type="ordered locus">ECP_1375</name>
</gene>
<organism>
    <name type="scientific">Escherichia coli O6:K15:H31 (strain 536 / UPEC)</name>
    <dbReference type="NCBI Taxonomy" id="362663"/>
    <lineage>
        <taxon>Bacteria</taxon>
        <taxon>Pseudomonadati</taxon>
        <taxon>Pseudomonadota</taxon>
        <taxon>Gammaproteobacteria</taxon>
        <taxon>Enterobacterales</taxon>
        <taxon>Enterobacteriaceae</taxon>
        <taxon>Escherichia</taxon>
    </lineage>
</organism>
<evidence type="ECO:0000255" key="1">
    <source>
        <dbReference type="HAMAP-Rule" id="MF_01085"/>
    </source>
</evidence>
<name>YCJF_ECOL5</name>
<dbReference type="EMBL" id="CP000247">
    <property type="protein sequence ID" value="ABG69386.1"/>
    <property type="molecule type" value="Genomic_DNA"/>
</dbReference>
<dbReference type="RefSeq" id="WP_000138728.1">
    <property type="nucleotide sequence ID" value="NC_008253.1"/>
</dbReference>
<dbReference type="SMR" id="Q0TI43"/>
<dbReference type="KEGG" id="ecp:ECP_1375"/>
<dbReference type="HOGENOM" id="CLU_057693_2_0_6"/>
<dbReference type="Proteomes" id="UP000009182">
    <property type="component" value="Chromosome"/>
</dbReference>
<dbReference type="GO" id="GO:0005886">
    <property type="term" value="C:plasma membrane"/>
    <property type="evidence" value="ECO:0007669"/>
    <property type="project" value="UniProtKB-SubCell"/>
</dbReference>
<dbReference type="HAMAP" id="MF_01085">
    <property type="entry name" value="UPF0283"/>
    <property type="match status" value="1"/>
</dbReference>
<dbReference type="InterPro" id="IPR021147">
    <property type="entry name" value="DUF697"/>
</dbReference>
<dbReference type="InterPro" id="IPR006507">
    <property type="entry name" value="UPF0283"/>
</dbReference>
<dbReference type="NCBIfam" id="TIGR01620">
    <property type="entry name" value="hyp_HI0043"/>
    <property type="match status" value="1"/>
</dbReference>
<dbReference type="PANTHER" id="PTHR39342">
    <property type="entry name" value="UPF0283 MEMBRANE PROTEIN YCJF"/>
    <property type="match status" value="1"/>
</dbReference>
<dbReference type="PANTHER" id="PTHR39342:SF1">
    <property type="entry name" value="UPF0283 MEMBRANE PROTEIN YCJF"/>
    <property type="match status" value="1"/>
</dbReference>
<dbReference type="Pfam" id="PF05128">
    <property type="entry name" value="DUF697"/>
    <property type="match status" value="1"/>
</dbReference>
<sequence length="353" mass="39392">MTEPLKPRIDFDGPLEVDQNPKFRAQQTFDENQAQNFAPATLDEAQEEEGQVEAVMDAALRPKRSLWRKMVMGGLALFGASVVGQGVQWTMNAWQTQDWVALGGCAAGALIIGAGVGSVVTEWRRLWRLRQRAHERDEARDLLHSHGTGKGRAFCEKLAQQAGIDQSHPALQRWYASIHETQNDREVVSLYAHLVQPVLDAQARREISRSAAESTLMIAVSPLALVDMAFIAWRNLRLINRIATLYGIELGYYSRLRLFKLVLLNIAFAGASELVREVGMDWMSQDLAARLSTRAAQGIGAGLLTARLGIKAMELCRPLPWIDDDKPRLGDFRRQLIGQVKETLQKGKTPSEK</sequence>
<keyword id="KW-0997">Cell inner membrane</keyword>
<keyword id="KW-1003">Cell membrane</keyword>
<keyword id="KW-0472">Membrane</keyword>
<keyword id="KW-0812">Transmembrane</keyword>
<keyword id="KW-1133">Transmembrane helix</keyword>
<reference key="1">
    <citation type="journal article" date="2006" name="Mol. Microbiol.">
        <title>Role of pathogenicity island-associated integrases in the genome plasticity of uropathogenic Escherichia coli strain 536.</title>
        <authorList>
            <person name="Hochhut B."/>
            <person name="Wilde C."/>
            <person name="Balling G."/>
            <person name="Middendorf B."/>
            <person name="Dobrindt U."/>
            <person name="Brzuszkiewicz E."/>
            <person name="Gottschalk G."/>
            <person name="Carniel E."/>
            <person name="Hacker J."/>
        </authorList>
    </citation>
    <scope>NUCLEOTIDE SEQUENCE [LARGE SCALE GENOMIC DNA]</scope>
    <source>
        <strain>536 / UPEC</strain>
    </source>
</reference>